<evidence type="ECO:0000250" key="1">
    <source>
        <dbReference type="UniProtKB" id="P60058"/>
    </source>
</evidence>
<evidence type="ECO:0000250" key="2">
    <source>
        <dbReference type="UniProtKB" id="P60059"/>
    </source>
</evidence>
<evidence type="ECO:0000250" key="3">
    <source>
        <dbReference type="UniProtKB" id="P61619"/>
    </source>
</evidence>
<evidence type="ECO:0000255" key="4"/>
<evidence type="ECO:0000305" key="5"/>
<accession>P60060</accession>
<accession>P38384</accession>
<feature type="chain" id="PRO_0000104196" description="Protein transport protein Sec61 subunit gamma">
    <location>
        <begin position="1"/>
        <end position="68"/>
    </location>
</feature>
<feature type="topological domain" description="Cytoplasmic" evidence="4">
    <location>
        <begin position="1"/>
        <end position="32"/>
    </location>
</feature>
<feature type="transmembrane region" description="Helical" evidence="4">
    <location>
        <begin position="33"/>
        <end position="61"/>
    </location>
</feature>
<feature type="topological domain" description="Extracellular" evidence="4">
    <location>
        <begin position="62"/>
        <end position="68"/>
    </location>
</feature>
<feature type="modified residue" description="N-acetylmethionine" evidence="2">
    <location>
        <position position="1"/>
    </location>
</feature>
<feature type="modified residue" description="Phosphoserine" evidence="2">
    <location>
        <position position="18"/>
    </location>
</feature>
<name>SC61G_MOUSE</name>
<gene>
    <name type="primary">Sec61g</name>
</gene>
<sequence>MDQVMQFVEPSRQFVKDSIRLVKRCTKPDRKEFQKIAMATAIGFAIMGFIGFFVKLIHIPINNIIVGG</sequence>
<dbReference type="EMBL" id="U11027">
    <property type="protein sequence ID" value="AAA19431.1"/>
    <property type="molecule type" value="mRNA"/>
</dbReference>
<dbReference type="EMBL" id="AK012393">
    <property type="protein sequence ID" value="BAB28210.1"/>
    <property type="molecule type" value="mRNA"/>
</dbReference>
<dbReference type="EMBL" id="AK012644">
    <property type="protein sequence ID" value="BAB28376.1"/>
    <property type="molecule type" value="mRNA"/>
</dbReference>
<dbReference type="EMBL" id="BC019158">
    <property type="protein sequence ID" value="AAH19158.1"/>
    <property type="molecule type" value="mRNA"/>
</dbReference>
<dbReference type="EMBL" id="BC081456">
    <property type="protein sequence ID" value="AAH81456.1"/>
    <property type="molecule type" value="mRNA"/>
</dbReference>
<dbReference type="CCDS" id="CCDS48755.1"/>
<dbReference type="RefSeq" id="NP_001103441.1">
    <property type="nucleotide sequence ID" value="NM_001109971.1"/>
</dbReference>
<dbReference type="RefSeq" id="NP_001103442.1">
    <property type="nucleotide sequence ID" value="NM_001109972.1"/>
</dbReference>
<dbReference type="RefSeq" id="NP_035473.2">
    <property type="nucleotide sequence ID" value="NM_011343.3"/>
</dbReference>
<dbReference type="RefSeq" id="XP_006496454.1">
    <property type="nucleotide sequence ID" value="XM_006496391.3"/>
</dbReference>
<dbReference type="RefSeq" id="XP_006514454.1">
    <property type="nucleotide sequence ID" value="XM_006514391.1"/>
</dbReference>
<dbReference type="SMR" id="P60060"/>
<dbReference type="BioGRID" id="203151">
    <property type="interactions" value="2"/>
</dbReference>
<dbReference type="FunCoup" id="P60060">
    <property type="interactions" value="696"/>
</dbReference>
<dbReference type="IntAct" id="P60060">
    <property type="interactions" value="1"/>
</dbReference>
<dbReference type="STRING" id="10090.ENSMUSP00000132348"/>
<dbReference type="PhosphoSitePlus" id="P60060"/>
<dbReference type="SwissPalm" id="P60060"/>
<dbReference type="jPOST" id="P60060"/>
<dbReference type="PaxDb" id="10090-ENSMUSP00000132348"/>
<dbReference type="PeptideAtlas" id="P60060"/>
<dbReference type="ProteomicsDB" id="256735"/>
<dbReference type="Pumba" id="P60060"/>
<dbReference type="TopDownProteomics" id="P60060"/>
<dbReference type="Antibodypedia" id="44752">
    <property type="antibodies" value="69 antibodies from 17 providers"/>
</dbReference>
<dbReference type="DNASU" id="20335"/>
<dbReference type="Ensembl" id="ENSMUST00000109641.2">
    <property type="protein sequence ID" value="ENSMUSP00000105269.2"/>
    <property type="gene ID" value="ENSMUSG00000078974.11"/>
</dbReference>
<dbReference type="Ensembl" id="ENSMUST00000109642.8">
    <property type="protein sequence ID" value="ENSMUSP00000105270.2"/>
    <property type="gene ID" value="ENSMUSG00000078974.11"/>
</dbReference>
<dbReference type="Ensembl" id="ENSMUST00000109643.8">
    <property type="protein sequence ID" value="ENSMUSP00000105271.2"/>
    <property type="gene ID" value="ENSMUSG00000078974.11"/>
</dbReference>
<dbReference type="Ensembl" id="ENSMUST00000178855.8">
    <property type="protein sequence ID" value="ENSMUSP00000137362.2"/>
    <property type="gene ID" value="ENSMUSG00000078974.11"/>
</dbReference>
<dbReference type="GeneID" id="20335"/>
<dbReference type="KEGG" id="mmu:20335"/>
<dbReference type="UCSC" id="uc007ibl.2">
    <property type="organism name" value="mouse"/>
</dbReference>
<dbReference type="AGR" id="MGI:1202066"/>
<dbReference type="CTD" id="23480"/>
<dbReference type="MGI" id="MGI:1202066">
    <property type="gene designation" value="Sec61g"/>
</dbReference>
<dbReference type="VEuPathDB" id="HostDB:ENSMUSG00000078974"/>
<dbReference type="eggNOG" id="KOG3498">
    <property type="taxonomic scope" value="Eukaryota"/>
</dbReference>
<dbReference type="GeneTree" id="ENSGT00390000001319"/>
<dbReference type="HOGENOM" id="CLU_167752_2_0_1"/>
<dbReference type="InParanoid" id="P60060"/>
<dbReference type="OMA" id="KPDQKEY"/>
<dbReference type="OrthoDB" id="2401875at2759"/>
<dbReference type="PhylomeDB" id="P60060"/>
<dbReference type="Reactome" id="R-MMU-9609523">
    <property type="pathway name" value="Insertion of tail-anchored proteins into the endoplasmic reticulum membrane"/>
</dbReference>
<dbReference type="BioGRID-ORCS" id="20335">
    <property type="hits" value="5 hits in 42 CRISPR screens"/>
</dbReference>
<dbReference type="ChiTaRS" id="Sec61g">
    <property type="organism name" value="mouse"/>
</dbReference>
<dbReference type="PRO" id="PR:P60060"/>
<dbReference type="Proteomes" id="UP000000589">
    <property type="component" value="Chromosome 11"/>
</dbReference>
<dbReference type="RNAct" id="P60060">
    <property type="molecule type" value="protein"/>
</dbReference>
<dbReference type="Bgee" id="ENSMUSG00000078974">
    <property type="expression patterns" value="Expressed in epiblast (generic) and 71 other cell types or tissues"/>
</dbReference>
<dbReference type="ExpressionAtlas" id="P60060">
    <property type="expression patterns" value="baseline and differential"/>
</dbReference>
<dbReference type="GO" id="GO:0005789">
    <property type="term" value="C:endoplasmic reticulum membrane"/>
    <property type="evidence" value="ECO:0007669"/>
    <property type="project" value="UniProtKB-SubCell"/>
</dbReference>
<dbReference type="GO" id="GO:0016020">
    <property type="term" value="C:membrane"/>
    <property type="evidence" value="ECO:0000266"/>
    <property type="project" value="MGI"/>
</dbReference>
<dbReference type="GO" id="GO:0008320">
    <property type="term" value="F:protein transmembrane transporter activity"/>
    <property type="evidence" value="ECO:0007669"/>
    <property type="project" value="InterPro"/>
</dbReference>
<dbReference type="GO" id="GO:0043022">
    <property type="term" value="F:ribosome binding"/>
    <property type="evidence" value="ECO:0000250"/>
    <property type="project" value="UniProtKB"/>
</dbReference>
<dbReference type="GO" id="GO:0006886">
    <property type="term" value="P:intracellular protein transport"/>
    <property type="evidence" value="ECO:0007669"/>
    <property type="project" value="InterPro"/>
</dbReference>
<dbReference type="GO" id="GO:0006605">
    <property type="term" value="P:protein targeting"/>
    <property type="evidence" value="ECO:0007669"/>
    <property type="project" value="InterPro"/>
</dbReference>
<dbReference type="FunFam" id="1.20.5.820:FF:000001">
    <property type="entry name" value="Transport protein Sec61 subunit gamma"/>
    <property type="match status" value="1"/>
</dbReference>
<dbReference type="Gene3D" id="1.20.5.820">
    <property type="entry name" value="Preprotein translocase SecE subunit"/>
    <property type="match status" value="1"/>
</dbReference>
<dbReference type="HAMAP" id="MF_00422">
    <property type="entry name" value="SecE"/>
    <property type="match status" value="1"/>
</dbReference>
<dbReference type="InterPro" id="IPR023391">
    <property type="entry name" value="Prot_translocase_SecE_dom_sf"/>
</dbReference>
<dbReference type="InterPro" id="IPR008158">
    <property type="entry name" value="Translocase_Sec61-g"/>
</dbReference>
<dbReference type="InterPro" id="IPR001901">
    <property type="entry name" value="Translocase_SecE/Sec61-g"/>
</dbReference>
<dbReference type="NCBIfam" id="TIGR00327">
    <property type="entry name" value="secE_euk_arch"/>
    <property type="match status" value="1"/>
</dbReference>
<dbReference type="PANTHER" id="PTHR12309">
    <property type="entry name" value="SEC61 GAMMA SUBUNIT"/>
    <property type="match status" value="1"/>
</dbReference>
<dbReference type="Pfam" id="PF00584">
    <property type="entry name" value="SecE"/>
    <property type="match status" value="1"/>
</dbReference>
<dbReference type="SUPFAM" id="SSF103456">
    <property type="entry name" value="Preprotein translocase SecE subunit"/>
    <property type="match status" value="1"/>
</dbReference>
<dbReference type="PROSITE" id="PS01067">
    <property type="entry name" value="SECE_SEC61G"/>
    <property type="match status" value="1"/>
</dbReference>
<protein>
    <recommendedName>
        <fullName>Protein transport protein Sec61 subunit gamma</fullName>
    </recommendedName>
</protein>
<organism>
    <name type="scientific">Mus musculus</name>
    <name type="common">Mouse</name>
    <dbReference type="NCBI Taxonomy" id="10090"/>
    <lineage>
        <taxon>Eukaryota</taxon>
        <taxon>Metazoa</taxon>
        <taxon>Chordata</taxon>
        <taxon>Craniata</taxon>
        <taxon>Vertebrata</taxon>
        <taxon>Euteleostomi</taxon>
        <taxon>Mammalia</taxon>
        <taxon>Eutheria</taxon>
        <taxon>Euarchontoglires</taxon>
        <taxon>Glires</taxon>
        <taxon>Rodentia</taxon>
        <taxon>Myomorpha</taxon>
        <taxon>Muroidea</taxon>
        <taxon>Muridae</taxon>
        <taxon>Murinae</taxon>
        <taxon>Mus</taxon>
        <taxon>Mus</taxon>
    </lineage>
</organism>
<reference key="1">
    <citation type="submission" date="1994-06" db="EMBL/GenBank/DDBJ databases">
        <title>Nucleotide sequence of the mouse Sec61-gamma cDNA.</title>
        <authorList>
            <person name="Yotov W.V."/>
            <person name="St Arnaud R."/>
        </authorList>
    </citation>
    <scope>NUCLEOTIDE SEQUENCE [MRNA]</scope>
    <source>
        <strain>C57BL/6J</strain>
        <tissue>Calvaria</tissue>
    </source>
</reference>
<reference key="2">
    <citation type="journal article" date="2005" name="Science">
        <title>The transcriptional landscape of the mammalian genome.</title>
        <authorList>
            <person name="Carninci P."/>
            <person name="Kasukawa T."/>
            <person name="Katayama S."/>
            <person name="Gough J."/>
            <person name="Frith M.C."/>
            <person name="Maeda N."/>
            <person name="Oyama R."/>
            <person name="Ravasi T."/>
            <person name="Lenhard B."/>
            <person name="Wells C."/>
            <person name="Kodzius R."/>
            <person name="Shimokawa K."/>
            <person name="Bajic V.B."/>
            <person name="Brenner S.E."/>
            <person name="Batalov S."/>
            <person name="Forrest A.R."/>
            <person name="Zavolan M."/>
            <person name="Davis M.J."/>
            <person name="Wilming L.G."/>
            <person name="Aidinis V."/>
            <person name="Allen J.E."/>
            <person name="Ambesi-Impiombato A."/>
            <person name="Apweiler R."/>
            <person name="Aturaliya R.N."/>
            <person name="Bailey T.L."/>
            <person name="Bansal M."/>
            <person name="Baxter L."/>
            <person name="Beisel K.W."/>
            <person name="Bersano T."/>
            <person name="Bono H."/>
            <person name="Chalk A.M."/>
            <person name="Chiu K.P."/>
            <person name="Choudhary V."/>
            <person name="Christoffels A."/>
            <person name="Clutterbuck D.R."/>
            <person name="Crowe M.L."/>
            <person name="Dalla E."/>
            <person name="Dalrymple B.P."/>
            <person name="de Bono B."/>
            <person name="Della Gatta G."/>
            <person name="di Bernardo D."/>
            <person name="Down T."/>
            <person name="Engstrom P."/>
            <person name="Fagiolini M."/>
            <person name="Faulkner G."/>
            <person name="Fletcher C.F."/>
            <person name="Fukushima T."/>
            <person name="Furuno M."/>
            <person name="Futaki S."/>
            <person name="Gariboldi M."/>
            <person name="Georgii-Hemming P."/>
            <person name="Gingeras T.R."/>
            <person name="Gojobori T."/>
            <person name="Green R.E."/>
            <person name="Gustincich S."/>
            <person name="Harbers M."/>
            <person name="Hayashi Y."/>
            <person name="Hensch T.K."/>
            <person name="Hirokawa N."/>
            <person name="Hill D."/>
            <person name="Huminiecki L."/>
            <person name="Iacono M."/>
            <person name="Ikeo K."/>
            <person name="Iwama A."/>
            <person name="Ishikawa T."/>
            <person name="Jakt M."/>
            <person name="Kanapin A."/>
            <person name="Katoh M."/>
            <person name="Kawasawa Y."/>
            <person name="Kelso J."/>
            <person name="Kitamura H."/>
            <person name="Kitano H."/>
            <person name="Kollias G."/>
            <person name="Krishnan S.P."/>
            <person name="Kruger A."/>
            <person name="Kummerfeld S.K."/>
            <person name="Kurochkin I.V."/>
            <person name="Lareau L.F."/>
            <person name="Lazarevic D."/>
            <person name="Lipovich L."/>
            <person name="Liu J."/>
            <person name="Liuni S."/>
            <person name="McWilliam S."/>
            <person name="Madan Babu M."/>
            <person name="Madera M."/>
            <person name="Marchionni L."/>
            <person name="Matsuda H."/>
            <person name="Matsuzawa S."/>
            <person name="Miki H."/>
            <person name="Mignone F."/>
            <person name="Miyake S."/>
            <person name="Morris K."/>
            <person name="Mottagui-Tabar S."/>
            <person name="Mulder N."/>
            <person name="Nakano N."/>
            <person name="Nakauchi H."/>
            <person name="Ng P."/>
            <person name="Nilsson R."/>
            <person name="Nishiguchi S."/>
            <person name="Nishikawa S."/>
            <person name="Nori F."/>
            <person name="Ohara O."/>
            <person name="Okazaki Y."/>
            <person name="Orlando V."/>
            <person name="Pang K.C."/>
            <person name="Pavan W.J."/>
            <person name="Pavesi G."/>
            <person name="Pesole G."/>
            <person name="Petrovsky N."/>
            <person name="Piazza S."/>
            <person name="Reed J."/>
            <person name="Reid J.F."/>
            <person name="Ring B.Z."/>
            <person name="Ringwald M."/>
            <person name="Rost B."/>
            <person name="Ruan Y."/>
            <person name="Salzberg S.L."/>
            <person name="Sandelin A."/>
            <person name="Schneider C."/>
            <person name="Schoenbach C."/>
            <person name="Sekiguchi K."/>
            <person name="Semple C.A."/>
            <person name="Seno S."/>
            <person name="Sessa L."/>
            <person name="Sheng Y."/>
            <person name="Shibata Y."/>
            <person name="Shimada H."/>
            <person name="Shimada K."/>
            <person name="Silva D."/>
            <person name="Sinclair B."/>
            <person name="Sperling S."/>
            <person name="Stupka E."/>
            <person name="Sugiura K."/>
            <person name="Sultana R."/>
            <person name="Takenaka Y."/>
            <person name="Taki K."/>
            <person name="Tammoja K."/>
            <person name="Tan S.L."/>
            <person name="Tang S."/>
            <person name="Taylor M.S."/>
            <person name="Tegner J."/>
            <person name="Teichmann S.A."/>
            <person name="Ueda H.R."/>
            <person name="van Nimwegen E."/>
            <person name="Verardo R."/>
            <person name="Wei C.L."/>
            <person name="Yagi K."/>
            <person name="Yamanishi H."/>
            <person name="Zabarovsky E."/>
            <person name="Zhu S."/>
            <person name="Zimmer A."/>
            <person name="Hide W."/>
            <person name="Bult C."/>
            <person name="Grimmond S.M."/>
            <person name="Teasdale R.D."/>
            <person name="Liu E.T."/>
            <person name="Brusic V."/>
            <person name="Quackenbush J."/>
            <person name="Wahlestedt C."/>
            <person name="Mattick J.S."/>
            <person name="Hume D.A."/>
            <person name="Kai C."/>
            <person name="Sasaki D."/>
            <person name="Tomaru Y."/>
            <person name="Fukuda S."/>
            <person name="Kanamori-Katayama M."/>
            <person name="Suzuki M."/>
            <person name="Aoki J."/>
            <person name="Arakawa T."/>
            <person name="Iida J."/>
            <person name="Imamura K."/>
            <person name="Itoh M."/>
            <person name="Kato T."/>
            <person name="Kawaji H."/>
            <person name="Kawagashira N."/>
            <person name="Kawashima T."/>
            <person name="Kojima M."/>
            <person name="Kondo S."/>
            <person name="Konno H."/>
            <person name="Nakano K."/>
            <person name="Ninomiya N."/>
            <person name="Nishio T."/>
            <person name="Okada M."/>
            <person name="Plessy C."/>
            <person name="Shibata K."/>
            <person name="Shiraki T."/>
            <person name="Suzuki S."/>
            <person name="Tagami M."/>
            <person name="Waki K."/>
            <person name="Watahiki A."/>
            <person name="Okamura-Oho Y."/>
            <person name="Suzuki H."/>
            <person name="Kawai J."/>
            <person name="Hayashizaki Y."/>
        </authorList>
    </citation>
    <scope>NUCLEOTIDE SEQUENCE [LARGE SCALE MRNA]</scope>
    <source>
        <strain>C57BL/6J</strain>
    </source>
</reference>
<reference key="3">
    <citation type="journal article" date="2004" name="Genome Res.">
        <title>The status, quality, and expansion of the NIH full-length cDNA project: the Mammalian Gene Collection (MGC).</title>
        <authorList>
            <consortium name="The MGC Project Team"/>
        </authorList>
    </citation>
    <scope>NUCLEOTIDE SEQUENCE [LARGE SCALE MRNA]</scope>
    <source>
        <strain>C57BL/6J</strain>
        <tissue>Brain</tissue>
        <tissue>Mammary tumor</tissue>
    </source>
</reference>
<proteinExistence type="inferred from homology"/>
<comment type="function">
    <text evidence="1 2 3">Component of SEC61 channel-forming translocon complex that mediates transport of signal peptide-containing precursor polypeptides across the endoplasmic reticulum (ER). Forms a ribosome receptor and a gated pore in the ER membrane, both functions required for cotranslational translocation of nascent polypeptides (By similarity). The SEC61 channel is also involved in ER membrane insertion of transmembrane proteins: it mediates membrane insertion of the first few transmembrane segments of proteins, while insertion of subsequent transmembrane regions of multi-pass membrane proteins is mediated by the multi-pass translocon (MPT) complex (By similarity). The SEC61 channel cooperates with the translocating protein TRAM1 to import nascent proteins into the ER (By similarity).</text>
</comment>
<comment type="subunit">
    <text evidence="1 2">The SEC61 channel-forming translocon complex consists of channel-forming core components SEC61A1, SEC61B and SEC61G and different auxiliary components such as SEC62 and SEC63 (By similarity). The SEC61 channel associates with the multi-pass translocon (MPT) complex (By similarity).</text>
</comment>
<comment type="subcellular location">
    <subcellularLocation>
        <location evidence="2">Endoplasmic reticulum membrane</location>
        <topology evidence="4">Single-pass membrane protein</topology>
    </subcellularLocation>
</comment>
<comment type="similarity">
    <text evidence="5">Belongs to the SecE/SEC61-gamma family.</text>
</comment>
<keyword id="KW-0007">Acetylation</keyword>
<keyword id="KW-0256">Endoplasmic reticulum</keyword>
<keyword id="KW-0472">Membrane</keyword>
<keyword id="KW-0597">Phosphoprotein</keyword>
<keyword id="KW-0653">Protein transport</keyword>
<keyword id="KW-1185">Reference proteome</keyword>
<keyword id="KW-0811">Translocation</keyword>
<keyword id="KW-0812">Transmembrane</keyword>
<keyword id="KW-1133">Transmembrane helix</keyword>
<keyword id="KW-0813">Transport</keyword>